<name>PHYA4_AVESA</name>
<gene>
    <name type="primary">PHYA4</name>
    <name type="synonym">PHY4</name>
</gene>
<feature type="initiator methionine" description="Removed" evidence="4">
    <location>
        <position position="1"/>
    </location>
</feature>
<feature type="chain" id="PRO_0000171968" description="Phytochrome A type 4">
    <location>
        <begin position="2"/>
        <end position="1129"/>
    </location>
</feature>
<feature type="domain" description="GAF">
    <location>
        <begin position="217"/>
        <end position="402"/>
    </location>
</feature>
<feature type="domain" description="PAS 1" evidence="2">
    <location>
        <begin position="618"/>
        <end position="688"/>
    </location>
</feature>
<feature type="domain" description="PAS 2" evidence="2">
    <location>
        <begin position="748"/>
        <end position="822"/>
    </location>
</feature>
<feature type="domain" description="Histidine kinase" evidence="1">
    <location>
        <begin position="902"/>
        <end position="1122"/>
    </location>
</feature>
<feature type="region of interest" description="Disordered" evidence="3">
    <location>
        <begin position="1"/>
        <end position="24"/>
    </location>
</feature>
<feature type="compositionally biased region" description="Low complexity" evidence="3">
    <location>
        <begin position="1"/>
        <end position="21"/>
    </location>
</feature>
<feature type="binding site" description="covalent">
    <location>
        <position position="322"/>
    </location>
    <ligand>
        <name>phytochromobilin</name>
        <dbReference type="ChEBI" id="CHEBI:189064"/>
    </ligand>
</feature>
<protein>
    <recommendedName>
        <fullName>Phytochrome A type 4</fullName>
        <shortName>AP4</shortName>
    </recommendedName>
</protein>
<keyword id="KW-0157">Chromophore</keyword>
<keyword id="KW-0903">Direct protein sequencing</keyword>
<keyword id="KW-0600">Photoreceptor protein</keyword>
<keyword id="KW-0675">Receptor</keyword>
<keyword id="KW-0677">Repeat</keyword>
<keyword id="KW-0716">Sensory transduction</keyword>
<keyword id="KW-0804">Transcription</keyword>
<keyword id="KW-0805">Transcription regulation</keyword>
<proteinExistence type="evidence at protein level"/>
<comment type="function">
    <text>Regulatory photoreceptor which exists in two forms that are reversibly interconvertible by light: the Pr form that absorbs maximally in the red region of the spectrum and the Pfr form that absorbs maximally in the far-red region. Photoconversion of Pr to Pfr induces an array of morphogenic responses, whereas reconversion of Pfr to Pr cancels the induction of those responses. Pfr controls the expression of a number of nuclear genes including those encoding the small subunit of ribulose-bisphosphate carboxylase, chlorophyll A/B binding protein, protochlorophyllide reductase, rRNA, etc. It also controls the expression of its own gene(s) in a negative feedback fashion.</text>
</comment>
<comment type="subunit">
    <text>Homodimer.</text>
</comment>
<comment type="PTM">
    <text>Contains one covalently linked phytochromobilin chromophore.</text>
</comment>
<comment type="similarity">
    <text evidence="5">Belongs to the phytochrome family.</text>
</comment>
<evidence type="ECO:0000255" key="1">
    <source>
        <dbReference type="PROSITE-ProRule" id="PRU00107"/>
    </source>
</evidence>
<evidence type="ECO:0000255" key="2">
    <source>
        <dbReference type="PROSITE-ProRule" id="PRU00140"/>
    </source>
</evidence>
<evidence type="ECO:0000256" key="3">
    <source>
        <dbReference type="SAM" id="MobiDB-lite"/>
    </source>
</evidence>
<evidence type="ECO:0000269" key="4">
    <source ref="2"/>
</evidence>
<evidence type="ECO:0000305" key="5"/>
<organism>
    <name type="scientific">Avena sativa</name>
    <name type="common">Oat</name>
    <dbReference type="NCBI Taxonomy" id="4498"/>
    <lineage>
        <taxon>Eukaryota</taxon>
        <taxon>Viridiplantae</taxon>
        <taxon>Streptophyta</taxon>
        <taxon>Embryophyta</taxon>
        <taxon>Tracheophyta</taxon>
        <taxon>Spermatophyta</taxon>
        <taxon>Magnoliopsida</taxon>
        <taxon>Liliopsida</taxon>
        <taxon>Poales</taxon>
        <taxon>Poaceae</taxon>
        <taxon>BOP clade</taxon>
        <taxon>Pooideae</taxon>
        <taxon>Poodae</taxon>
        <taxon>Poeae</taxon>
        <taxon>Poeae Chloroplast Group 1 (Aveneae type)</taxon>
        <taxon>Aveninae</taxon>
        <taxon>Avena</taxon>
    </lineage>
</organism>
<reference key="1">
    <citation type="journal article" date="1985" name="Nucleic Acids Res.">
        <title>Analysis of cloned cDNA and genomic sequences for phytochrome: complete amino acid sequences for two gene products expressed in etiolated Avena.</title>
        <authorList>
            <person name="Hershey H.P."/>
            <person name="Barker R.F."/>
            <person name="Idler K.B."/>
            <person name="Lissemore J.L."/>
            <person name="Quail P.H."/>
        </authorList>
    </citation>
    <scope>NUCLEOTIDE SEQUENCE [MRNA]</scope>
</reference>
<reference key="2">
    <citation type="journal article" date="1988" name="FEBS Lett.">
        <title>The amino-terminal structure of oat phytochrome.</title>
        <authorList>
            <person name="Grimm R."/>
            <person name="Kellermann J."/>
            <person name="Schaefer W."/>
            <person name="Ruediger W."/>
        </authorList>
    </citation>
    <scope>PROTEIN SEQUENCE OF 2-13</scope>
</reference>
<accession>P06594</accession>
<sequence length="1129" mass="125072">MSSSRPASSSSSRNRQSSRARVLAQTTLDAELNAEYEESGDSFDYSKLVEAQRDGPPVQQGRSEKVIAYLQHIQKGKLIQTFGCMLALDEKSFNVIAFSENAPEMLTTVSHAVPSVDDPPRLGIGTNVRSLFSDQGATALHKALGFADVSLLNPILVQCKTSGKPFYAIVHRATGCLVVDFEPVKPTEFPATAAGALQSYKLAAKAISKIQSLPGGSMEVLCNTVVKEVFDLTGYDRVMAYKFHEDDHGEVFAEITKPGLEPYLGLHYPATDIPQAARFLFMKNKVRMICDCRARSIKVIEAEALPFDISLCGSALRAPHSCHLQYMENMNSIASLVMAVVVNENEEDDEAESEQPAQQQQKKKLWGLLVCHHESPRYVPFPLRYACEFLAQVFAVHVNREFELEKQLREKSILKMQTMLSDMLFREASPLTIVSGAPNIMDLVKCDGAALLYGGKVWRLRNAPTESQIHDIAFWLSDVHRDSTGLSTDSLHDAGYPGASALGDMICGMAVAKINSKDIIFWFRSHTAAEIRWGGAKHDSSDMDDSRRMHPRLSFKAFLEVVKMKSLPWTDYEMDAIHSLQLILRGTLNDASKPKREASLDNQIGDLKLDGLAELQAVTSEMVRLMETATVPILAVDGNGLVNGWNQKAAELTGLRVDDAIGRHILTLVEESSVPVVQRMLYLALQGKEEKEVRFEVKTHGPRRDDGPVILVVNACASRDLHDHVVGVCFVAQDMTVHKLVMDKFTRVEGDYKAIIHNPNPLIPPIFGADEFGWCSEWNAAMTKLTGWNRDEVLDKMLLGEVFDSSNASCPLKNKNAFVSLCVLINSALAGEETEKAPFGFFDRSGKYIECLLSANRKENEGGLITGVFCFIHVASHELQHALQVQQASEQTSLKRLKAFSYMRHAINNPLSGMLYSRKALKNTDLNEEQMKQIHVGDNCHHQINKILADLDQDSISEKSSCLDLEMAEFVFQDVVVAAVSQVLITCQGKGIRISCNLPERFMKQSVYGDGVRLQQILSDFLFISVKFSPVGGSVEISSKLTKNSIGENLHLIDLELRIKHQGLGVPAELMEQMFEEDNKEQSDEGLGLLVSRKLLRLMNGDVRHLREAGVSTFILTAELASAPTAIGQ</sequence>
<dbReference type="EMBL" id="X03243">
    <property type="protein sequence ID" value="CAA27000.1"/>
    <property type="molecule type" value="mRNA"/>
</dbReference>
<dbReference type="PIR" id="S00097">
    <property type="entry name" value="S00097"/>
</dbReference>
<dbReference type="SMR" id="P06594"/>
<dbReference type="EnsemblPlants" id="AVESA.00001b.r3.7Cg0000956.1">
    <property type="protein sequence ID" value="cds.AVESA.00001b.r3.7Cg0000956.1"/>
    <property type="gene ID" value="AVESA.00001b.r3.7Cg0000956"/>
</dbReference>
<dbReference type="EnsemblPlants" id="AVESA.00010b.r2.7CG0699610.1">
    <property type="protein sequence ID" value="AVESA.00010b.r2.7CG0699610.1.CDS"/>
    <property type="gene ID" value="AVESA.00010b.r2.7CG0699610"/>
</dbReference>
<dbReference type="Gramene" id="AVESA.00001b.r3.7Cg0000956.1">
    <property type="protein sequence ID" value="cds.AVESA.00001b.r3.7Cg0000956.1"/>
    <property type="gene ID" value="AVESA.00001b.r3.7Cg0000956"/>
</dbReference>
<dbReference type="Gramene" id="AVESA.00010b.r2.7CG0699610.1">
    <property type="protein sequence ID" value="AVESA.00010b.r2.7CG0699610.1.CDS"/>
    <property type="gene ID" value="AVESA.00010b.r2.7CG0699610"/>
</dbReference>
<dbReference type="GO" id="GO:0000155">
    <property type="term" value="F:phosphorelay sensor kinase activity"/>
    <property type="evidence" value="ECO:0007669"/>
    <property type="project" value="InterPro"/>
</dbReference>
<dbReference type="GO" id="GO:0009881">
    <property type="term" value="F:photoreceptor activity"/>
    <property type="evidence" value="ECO:0007669"/>
    <property type="project" value="UniProtKB-KW"/>
</dbReference>
<dbReference type="GO" id="GO:0042803">
    <property type="term" value="F:protein homodimerization activity"/>
    <property type="evidence" value="ECO:0007669"/>
    <property type="project" value="InterPro"/>
</dbReference>
<dbReference type="GO" id="GO:0009584">
    <property type="term" value="P:detection of visible light"/>
    <property type="evidence" value="ECO:0007669"/>
    <property type="project" value="InterPro"/>
</dbReference>
<dbReference type="GO" id="GO:0009585">
    <property type="term" value="P:red, far-red light phototransduction"/>
    <property type="evidence" value="ECO:0007669"/>
    <property type="project" value="InterPro"/>
</dbReference>
<dbReference type="GO" id="GO:0006355">
    <property type="term" value="P:regulation of DNA-templated transcription"/>
    <property type="evidence" value="ECO:0007669"/>
    <property type="project" value="InterPro"/>
</dbReference>
<dbReference type="CDD" id="cd16932">
    <property type="entry name" value="HATPase_Phy-like"/>
    <property type="match status" value="1"/>
</dbReference>
<dbReference type="CDD" id="cd00082">
    <property type="entry name" value="HisKA"/>
    <property type="match status" value="1"/>
</dbReference>
<dbReference type="CDD" id="cd00130">
    <property type="entry name" value="PAS"/>
    <property type="match status" value="2"/>
</dbReference>
<dbReference type="FunFam" id="3.30.450.270:FF:000001">
    <property type="entry name" value="Phytochrome"/>
    <property type="match status" value="1"/>
</dbReference>
<dbReference type="Gene3D" id="3.30.450.270">
    <property type="match status" value="1"/>
</dbReference>
<dbReference type="Gene3D" id="3.30.450.40">
    <property type="match status" value="1"/>
</dbReference>
<dbReference type="Gene3D" id="3.30.565.10">
    <property type="entry name" value="Histidine kinase-like ATPase, C-terminal domain"/>
    <property type="match status" value="1"/>
</dbReference>
<dbReference type="Gene3D" id="3.30.450.20">
    <property type="entry name" value="PAS domain"/>
    <property type="match status" value="3"/>
</dbReference>
<dbReference type="InterPro" id="IPR003018">
    <property type="entry name" value="GAF"/>
</dbReference>
<dbReference type="InterPro" id="IPR029016">
    <property type="entry name" value="GAF-like_dom_sf"/>
</dbReference>
<dbReference type="InterPro" id="IPR036890">
    <property type="entry name" value="HATPase_C_sf"/>
</dbReference>
<dbReference type="InterPro" id="IPR005467">
    <property type="entry name" value="His_kinase_dom"/>
</dbReference>
<dbReference type="InterPro" id="IPR003661">
    <property type="entry name" value="HisK_dim/P_dom"/>
</dbReference>
<dbReference type="InterPro" id="IPR000014">
    <property type="entry name" value="PAS"/>
</dbReference>
<dbReference type="InterPro" id="IPR035965">
    <property type="entry name" value="PAS-like_dom_sf"/>
</dbReference>
<dbReference type="InterPro" id="IPR013654">
    <property type="entry name" value="PAS_2"/>
</dbReference>
<dbReference type="InterPro" id="IPR013767">
    <property type="entry name" value="PAS_fold"/>
</dbReference>
<dbReference type="InterPro" id="IPR044767">
    <property type="entry name" value="Phy_HATPase-like"/>
</dbReference>
<dbReference type="InterPro" id="IPR016132">
    <property type="entry name" value="Phyto_chromo_attachment"/>
</dbReference>
<dbReference type="InterPro" id="IPR013516">
    <property type="entry name" value="Phyto_chromo_BS"/>
</dbReference>
<dbReference type="InterPro" id="IPR001294">
    <property type="entry name" value="Phytochrome"/>
</dbReference>
<dbReference type="InterPro" id="IPR012129">
    <property type="entry name" value="Phytochrome_A-E"/>
</dbReference>
<dbReference type="InterPro" id="IPR013515">
    <property type="entry name" value="Phytochrome_cen-reg"/>
</dbReference>
<dbReference type="InterPro" id="IPR043150">
    <property type="entry name" value="Phytochrome_PHY_sf"/>
</dbReference>
<dbReference type="NCBIfam" id="TIGR00229">
    <property type="entry name" value="sensory_box"/>
    <property type="match status" value="1"/>
</dbReference>
<dbReference type="PANTHER" id="PTHR47876">
    <property type="entry name" value="OS08G0260000 PROTEIN"/>
    <property type="match status" value="1"/>
</dbReference>
<dbReference type="PANTHER" id="PTHR47876:SF3">
    <property type="entry name" value="PHYTOCHROME 1"/>
    <property type="match status" value="1"/>
</dbReference>
<dbReference type="Pfam" id="PF01590">
    <property type="entry name" value="GAF"/>
    <property type="match status" value="1"/>
</dbReference>
<dbReference type="Pfam" id="PF02518">
    <property type="entry name" value="HATPase_c"/>
    <property type="match status" value="1"/>
</dbReference>
<dbReference type="Pfam" id="PF00512">
    <property type="entry name" value="HisKA"/>
    <property type="match status" value="1"/>
</dbReference>
<dbReference type="Pfam" id="PF00989">
    <property type="entry name" value="PAS"/>
    <property type="match status" value="2"/>
</dbReference>
<dbReference type="Pfam" id="PF08446">
    <property type="entry name" value="PAS_2"/>
    <property type="match status" value="1"/>
</dbReference>
<dbReference type="Pfam" id="PF00360">
    <property type="entry name" value="PHY"/>
    <property type="match status" value="1"/>
</dbReference>
<dbReference type="PIRSF" id="PIRSF000084">
    <property type="entry name" value="Phytochrome"/>
    <property type="match status" value="1"/>
</dbReference>
<dbReference type="PRINTS" id="PR01033">
    <property type="entry name" value="PHYTOCHROME"/>
</dbReference>
<dbReference type="SMART" id="SM00065">
    <property type="entry name" value="GAF"/>
    <property type="match status" value="1"/>
</dbReference>
<dbReference type="SMART" id="SM00387">
    <property type="entry name" value="HATPase_c"/>
    <property type="match status" value="1"/>
</dbReference>
<dbReference type="SMART" id="SM00388">
    <property type="entry name" value="HisKA"/>
    <property type="match status" value="1"/>
</dbReference>
<dbReference type="SMART" id="SM00091">
    <property type="entry name" value="PAS"/>
    <property type="match status" value="2"/>
</dbReference>
<dbReference type="SUPFAM" id="SSF55874">
    <property type="entry name" value="ATPase domain of HSP90 chaperone/DNA topoisomerase II/histidine kinase"/>
    <property type="match status" value="1"/>
</dbReference>
<dbReference type="SUPFAM" id="SSF55781">
    <property type="entry name" value="GAF domain-like"/>
    <property type="match status" value="2"/>
</dbReference>
<dbReference type="SUPFAM" id="SSF55785">
    <property type="entry name" value="PYP-like sensor domain (PAS domain)"/>
    <property type="match status" value="3"/>
</dbReference>
<dbReference type="PROSITE" id="PS50109">
    <property type="entry name" value="HIS_KIN"/>
    <property type="match status" value="1"/>
</dbReference>
<dbReference type="PROSITE" id="PS50112">
    <property type="entry name" value="PAS"/>
    <property type="match status" value="2"/>
</dbReference>
<dbReference type="PROSITE" id="PS00245">
    <property type="entry name" value="PHYTOCHROME_1"/>
    <property type="match status" value="1"/>
</dbReference>
<dbReference type="PROSITE" id="PS50046">
    <property type="entry name" value="PHYTOCHROME_2"/>
    <property type="match status" value="1"/>
</dbReference>